<organism>
    <name type="scientific">Bacillus pumilus (strain SAFR-032)</name>
    <dbReference type="NCBI Taxonomy" id="315750"/>
    <lineage>
        <taxon>Bacteria</taxon>
        <taxon>Bacillati</taxon>
        <taxon>Bacillota</taxon>
        <taxon>Bacilli</taxon>
        <taxon>Bacillales</taxon>
        <taxon>Bacillaceae</taxon>
        <taxon>Bacillus</taxon>
    </lineage>
</organism>
<protein>
    <recommendedName>
        <fullName evidence="1">Quinolinate synthase</fullName>
        <ecNumber evidence="1">2.5.1.72</ecNumber>
    </recommendedName>
</protein>
<name>NADA_BACP2</name>
<proteinExistence type="inferred from homology"/>
<gene>
    <name evidence="1" type="primary">nadA</name>
    <name type="ordered locus">BPUM_2425</name>
</gene>
<sequence>MSLLDVLANQHAAMMPEEYKHRSVDEMEQRVVDIKRAFGSKLFIPGHHYQKDEVIQFADATGDSLQLAQIAADNKEAEYIVFCGVHFMAETADMLSKKNQKVLLPDMRAGCSMADMANMKQTDRAWEQLTDLFGETILPLTYVNSTADIKAFVGKHGGATVTSSNAKKMLEWALTQKERILFLPDQHLGRNTAFDLGISLEEMAVWDQIEERLITDQPLSRIKMILWKGHCSVHEKFTVRNIEETRKRDRDIQILVHPECTHEVVTASDLAGSTKFIIDTIKEAPAGSKWAIGTEMNLVKRIINQHPDKQIESLNPDMCPCLTMNRIDLPHLLWSLESIEKGDPVGFIQVNEDTTKDALLALNKMLIIK</sequence>
<keyword id="KW-0004">4Fe-4S</keyword>
<keyword id="KW-0963">Cytoplasm</keyword>
<keyword id="KW-0408">Iron</keyword>
<keyword id="KW-0411">Iron-sulfur</keyword>
<keyword id="KW-0479">Metal-binding</keyword>
<keyword id="KW-0662">Pyridine nucleotide biosynthesis</keyword>
<keyword id="KW-0808">Transferase</keyword>
<reference key="1">
    <citation type="journal article" date="2007" name="PLoS ONE">
        <title>Paradoxical DNA repair and peroxide resistance gene conservation in Bacillus pumilus SAFR-032.</title>
        <authorList>
            <person name="Gioia J."/>
            <person name="Yerrapragada S."/>
            <person name="Qin X."/>
            <person name="Jiang H."/>
            <person name="Igboeli O.C."/>
            <person name="Muzny D."/>
            <person name="Dugan-Rocha S."/>
            <person name="Ding Y."/>
            <person name="Hawes A."/>
            <person name="Liu W."/>
            <person name="Perez L."/>
            <person name="Kovar C."/>
            <person name="Dinh H."/>
            <person name="Lee S."/>
            <person name="Nazareth L."/>
            <person name="Blyth P."/>
            <person name="Holder M."/>
            <person name="Buhay C."/>
            <person name="Tirumalai M.R."/>
            <person name="Liu Y."/>
            <person name="Dasgupta I."/>
            <person name="Bokhetache L."/>
            <person name="Fujita M."/>
            <person name="Karouia F."/>
            <person name="Eswara Moorthy P."/>
            <person name="Siefert J."/>
            <person name="Uzman A."/>
            <person name="Buzumbo P."/>
            <person name="Verma A."/>
            <person name="Zwiya H."/>
            <person name="McWilliams B.D."/>
            <person name="Olowu A."/>
            <person name="Clinkenbeard K.D."/>
            <person name="Newcombe D."/>
            <person name="Golebiewski L."/>
            <person name="Petrosino J.F."/>
            <person name="Nicholson W.L."/>
            <person name="Fox G.E."/>
            <person name="Venkateswaran K."/>
            <person name="Highlander S.K."/>
            <person name="Weinstock G.M."/>
        </authorList>
    </citation>
    <scope>NUCLEOTIDE SEQUENCE [LARGE SCALE GENOMIC DNA]</scope>
    <source>
        <strain>SAFR-032</strain>
    </source>
</reference>
<accession>A8FFS2</accession>
<dbReference type="EC" id="2.5.1.72" evidence="1"/>
<dbReference type="EMBL" id="CP000813">
    <property type="protein sequence ID" value="ABV63089.1"/>
    <property type="molecule type" value="Genomic_DNA"/>
</dbReference>
<dbReference type="RefSeq" id="WP_012010752.1">
    <property type="nucleotide sequence ID" value="NZ_VEIS01000010.1"/>
</dbReference>
<dbReference type="SMR" id="A8FFS2"/>
<dbReference type="STRING" id="315750.BPUM_2425"/>
<dbReference type="GeneID" id="5621688"/>
<dbReference type="KEGG" id="bpu:BPUM_2425"/>
<dbReference type="eggNOG" id="COG0379">
    <property type="taxonomic scope" value="Bacteria"/>
</dbReference>
<dbReference type="HOGENOM" id="CLU_047382_2_0_9"/>
<dbReference type="OrthoDB" id="9801204at2"/>
<dbReference type="UniPathway" id="UPA00253">
    <property type="reaction ID" value="UER00327"/>
</dbReference>
<dbReference type="Proteomes" id="UP000001355">
    <property type="component" value="Chromosome"/>
</dbReference>
<dbReference type="GO" id="GO:0005829">
    <property type="term" value="C:cytosol"/>
    <property type="evidence" value="ECO:0007669"/>
    <property type="project" value="TreeGrafter"/>
</dbReference>
<dbReference type="GO" id="GO:0051539">
    <property type="term" value="F:4 iron, 4 sulfur cluster binding"/>
    <property type="evidence" value="ECO:0007669"/>
    <property type="project" value="UniProtKB-KW"/>
</dbReference>
<dbReference type="GO" id="GO:0046872">
    <property type="term" value="F:metal ion binding"/>
    <property type="evidence" value="ECO:0007669"/>
    <property type="project" value="UniProtKB-KW"/>
</dbReference>
<dbReference type="GO" id="GO:0008987">
    <property type="term" value="F:quinolinate synthetase A activity"/>
    <property type="evidence" value="ECO:0007669"/>
    <property type="project" value="UniProtKB-UniRule"/>
</dbReference>
<dbReference type="GO" id="GO:0034628">
    <property type="term" value="P:'de novo' NAD biosynthetic process from L-aspartate"/>
    <property type="evidence" value="ECO:0007669"/>
    <property type="project" value="TreeGrafter"/>
</dbReference>
<dbReference type="FunFam" id="3.40.50.10800:FF:000001">
    <property type="entry name" value="Quinolinate synthase A"/>
    <property type="match status" value="1"/>
</dbReference>
<dbReference type="Gene3D" id="3.40.50.10800">
    <property type="entry name" value="NadA-like"/>
    <property type="match status" value="3"/>
</dbReference>
<dbReference type="HAMAP" id="MF_00569">
    <property type="entry name" value="NadA_type3"/>
    <property type="match status" value="1"/>
</dbReference>
<dbReference type="InterPro" id="IPR003473">
    <property type="entry name" value="NadA"/>
</dbReference>
<dbReference type="InterPro" id="IPR036094">
    <property type="entry name" value="NadA_sf"/>
</dbReference>
<dbReference type="InterPro" id="IPR023515">
    <property type="entry name" value="Quinolinate_synth_A_type3"/>
</dbReference>
<dbReference type="NCBIfam" id="TIGR00550">
    <property type="entry name" value="nadA"/>
    <property type="match status" value="1"/>
</dbReference>
<dbReference type="NCBIfam" id="NF006880">
    <property type="entry name" value="PRK09375.2-1"/>
    <property type="match status" value="1"/>
</dbReference>
<dbReference type="NCBIfam" id="NF006883">
    <property type="entry name" value="PRK09375.2-4"/>
    <property type="match status" value="1"/>
</dbReference>
<dbReference type="PANTHER" id="PTHR30573:SF0">
    <property type="entry name" value="QUINOLINATE SYNTHASE, CHLOROPLASTIC"/>
    <property type="match status" value="1"/>
</dbReference>
<dbReference type="PANTHER" id="PTHR30573">
    <property type="entry name" value="QUINOLINATE SYNTHETASE A"/>
    <property type="match status" value="1"/>
</dbReference>
<dbReference type="Pfam" id="PF02445">
    <property type="entry name" value="NadA"/>
    <property type="match status" value="1"/>
</dbReference>
<dbReference type="SUPFAM" id="SSF142754">
    <property type="entry name" value="NadA-like"/>
    <property type="match status" value="1"/>
</dbReference>
<evidence type="ECO:0000255" key="1">
    <source>
        <dbReference type="HAMAP-Rule" id="MF_00569"/>
    </source>
</evidence>
<comment type="function">
    <text evidence="1">Catalyzes the condensation of iminoaspartate with dihydroxyacetone phosphate to form quinolinate.</text>
</comment>
<comment type="catalytic activity">
    <reaction evidence="1">
        <text>iminosuccinate + dihydroxyacetone phosphate = quinolinate + phosphate + 2 H2O + H(+)</text>
        <dbReference type="Rhea" id="RHEA:25888"/>
        <dbReference type="ChEBI" id="CHEBI:15377"/>
        <dbReference type="ChEBI" id="CHEBI:15378"/>
        <dbReference type="ChEBI" id="CHEBI:29959"/>
        <dbReference type="ChEBI" id="CHEBI:43474"/>
        <dbReference type="ChEBI" id="CHEBI:57642"/>
        <dbReference type="ChEBI" id="CHEBI:77875"/>
        <dbReference type="EC" id="2.5.1.72"/>
    </reaction>
    <physiologicalReaction direction="left-to-right" evidence="1">
        <dbReference type="Rhea" id="RHEA:25889"/>
    </physiologicalReaction>
</comment>
<comment type="cofactor">
    <cofactor evidence="1">
        <name>[4Fe-4S] cluster</name>
        <dbReference type="ChEBI" id="CHEBI:49883"/>
    </cofactor>
    <text evidence="1">Binds 1 [4Fe-4S] cluster per subunit.</text>
</comment>
<comment type="pathway">
    <text evidence="1">Cofactor biosynthesis; NAD(+) biosynthesis; quinolinate from iminoaspartate: step 1/1.</text>
</comment>
<comment type="subcellular location">
    <subcellularLocation>
        <location evidence="1">Cytoplasm</location>
    </subcellularLocation>
</comment>
<comment type="similarity">
    <text evidence="1">Belongs to the quinolinate synthase family. Type 3 subfamily.</text>
</comment>
<feature type="chain" id="PRO_1000061165" description="Quinolinate synthase">
    <location>
        <begin position="1"/>
        <end position="369"/>
    </location>
</feature>
<feature type="binding site" evidence="1">
    <location>
        <position position="47"/>
    </location>
    <ligand>
        <name>iminosuccinate</name>
        <dbReference type="ChEBI" id="CHEBI:77875"/>
    </ligand>
</feature>
<feature type="binding site" evidence="1">
    <location>
        <position position="64"/>
    </location>
    <ligand>
        <name>iminosuccinate</name>
        <dbReference type="ChEBI" id="CHEBI:77875"/>
    </ligand>
</feature>
<feature type="binding site" evidence="1">
    <location>
        <position position="111"/>
    </location>
    <ligand>
        <name>[4Fe-4S] cluster</name>
        <dbReference type="ChEBI" id="CHEBI:49883"/>
    </ligand>
</feature>
<feature type="binding site" evidence="1">
    <location>
        <begin position="142"/>
        <end position="144"/>
    </location>
    <ligand>
        <name>iminosuccinate</name>
        <dbReference type="ChEBI" id="CHEBI:77875"/>
    </ligand>
</feature>
<feature type="binding site" evidence="1">
    <location>
        <position position="163"/>
    </location>
    <ligand>
        <name>iminosuccinate</name>
        <dbReference type="ChEBI" id="CHEBI:77875"/>
    </ligand>
</feature>
<feature type="binding site" evidence="1">
    <location>
        <position position="231"/>
    </location>
    <ligand>
        <name>[4Fe-4S] cluster</name>
        <dbReference type="ChEBI" id="CHEBI:49883"/>
    </ligand>
</feature>
<feature type="binding site" evidence="1">
    <location>
        <begin position="257"/>
        <end position="259"/>
    </location>
    <ligand>
        <name>iminosuccinate</name>
        <dbReference type="ChEBI" id="CHEBI:77875"/>
    </ligand>
</feature>
<feature type="binding site" evidence="1">
    <location>
        <position position="274"/>
    </location>
    <ligand>
        <name>iminosuccinate</name>
        <dbReference type="ChEBI" id="CHEBI:77875"/>
    </ligand>
</feature>
<feature type="binding site" evidence="1">
    <location>
        <position position="321"/>
    </location>
    <ligand>
        <name>[4Fe-4S] cluster</name>
        <dbReference type="ChEBI" id="CHEBI:49883"/>
    </ligand>
</feature>